<organism>
    <name type="scientific">Ehrlichia chaffeensis (strain ATCC CRL-10679 / Arkansas)</name>
    <dbReference type="NCBI Taxonomy" id="205920"/>
    <lineage>
        <taxon>Bacteria</taxon>
        <taxon>Pseudomonadati</taxon>
        <taxon>Pseudomonadota</taxon>
        <taxon>Alphaproteobacteria</taxon>
        <taxon>Rickettsiales</taxon>
        <taxon>Anaplasmataceae</taxon>
        <taxon>Ehrlichia</taxon>
    </lineage>
</organism>
<name>KGUA_EHRCR</name>
<protein>
    <recommendedName>
        <fullName evidence="1">Guanylate kinase</fullName>
        <ecNumber evidence="1">2.7.4.8</ecNumber>
    </recommendedName>
    <alternativeName>
        <fullName evidence="1">GMP kinase</fullName>
    </alternativeName>
</protein>
<accession>Q2GHE0</accession>
<reference key="1">
    <citation type="journal article" date="2006" name="PLoS Genet.">
        <title>Comparative genomics of emerging human ehrlichiosis agents.</title>
        <authorList>
            <person name="Dunning Hotopp J.C."/>
            <person name="Lin M."/>
            <person name="Madupu R."/>
            <person name="Crabtree J."/>
            <person name="Angiuoli S.V."/>
            <person name="Eisen J.A."/>
            <person name="Seshadri R."/>
            <person name="Ren Q."/>
            <person name="Wu M."/>
            <person name="Utterback T.R."/>
            <person name="Smith S."/>
            <person name="Lewis M."/>
            <person name="Khouri H."/>
            <person name="Zhang C."/>
            <person name="Niu H."/>
            <person name="Lin Q."/>
            <person name="Ohashi N."/>
            <person name="Zhi N."/>
            <person name="Nelson W.C."/>
            <person name="Brinkac L.M."/>
            <person name="Dodson R.J."/>
            <person name="Rosovitz M.J."/>
            <person name="Sundaram J.P."/>
            <person name="Daugherty S.C."/>
            <person name="Davidsen T."/>
            <person name="Durkin A.S."/>
            <person name="Gwinn M.L."/>
            <person name="Haft D.H."/>
            <person name="Selengut J.D."/>
            <person name="Sullivan S.A."/>
            <person name="Zafar N."/>
            <person name="Zhou L."/>
            <person name="Benahmed F."/>
            <person name="Forberger H."/>
            <person name="Halpin R."/>
            <person name="Mulligan S."/>
            <person name="Robinson J."/>
            <person name="White O."/>
            <person name="Rikihisa Y."/>
            <person name="Tettelin H."/>
        </authorList>
    </citation>
    <scope>NUCLEOTIDE SEQUENCE [LARGE SCALE GENOMIC DNA]</scope>
    <source>
        <strain>ATCC CRL-10679 / Arkansas</strain>
    </source>
</reference>
<proteinExistence type="inferred from homology"/>
<keyword id="KW-0067">ATP-binding</keyword>
<keyword id="KW-0963">Cytoplasm</keyword>
<keyword id="KW-0418">Kinase</keyword>
<keyword id="KW-0547">Nucleotide-binding</keyword>
<keyword id="KW-1185">Reference proteome</keyword>
<keyword id="KW-0808">Transferase</keyword>
<evidence type="ECO:0000255" key="1">
    <source>
        <dbReference type="HAMAP-Rule" id="MF_00328"/>
    </source>
</evidence>
<feature type="chain" id="PRO_0000266320" description="Guanylate kinase">
    <location>
        <begin position="1"/>
        <end position="209"/>
    </location>
</feature>
<feature type="domain" description="Guanylate kinase-like" evidence="1">
    <location>
        <begin position="9"/>
        <end position="188"/>
    </location>
</feature>
<feature type="binding site" evidence="1">
    <location>
        <begin position="16"/>
        <end position="23"/>
    </location>
    <ligand>
        <name>ATP</name>
        <dbReference type="ChEBI" id="CHEBI:30616"/>
    </ligand>
</feature>
<dbReference type="EC" id="2.7.4.8" evidence="1"/>
<dbReference type="EMBL" id="CP000236">
    <property type="protein sequence ID" value="ABD45409.1"/>
    <property type="molecule type" value="Genomic_DNA"/>
</dbReference>
<dbReference type="RefSeq" id="WP_011452533.1">
    <property type="nucleotide sequence ID" value="NC_007799.1"/>
</dbReference>
<dbReference type="SMR" id="Q2GHE0"/>
<dbReference type="STRING" id="205920.ECH_0322"/>
<dbReference type="KEGG" id="ech:ECH_0322"/>
<dbReference type="eggNOG" id="COG0194">
    <property type="taxonomic scope" value="Bacteria"/>
</dbReference>
<dbReference type="HOGENOM" id="CLU_001715_1_2_5"/>
<dbReference type="OrthoDB" id="9808150at2"/>
<dbReference type="Proteomes" id="UP000008320">
    <property type="component" value="Chromosome"/>
</dbReference>
<dbReference type="GO" id="GO:0005829">
    <property type="term" value="C:cytosol"/>
    <property type="evidence" value="ECO:0007669"/>
    <property type="project" value="TreeGrafter"/>
</dbReference>
<dbReference type="GO" id="GO:0005524">
    <property type="term" value="F:ATP binding"/>
    <property type="evidence" value="ECO:0007669"/>
    <property type="project" value="UniProtKB-UniRule"/>
</dbReference>
<dbReference type="GO" id="GO:0004385">
    <property type="term" value="F:guanylate kinase activity"/>
    <property type="evidence" value="ECO:0007669"/>
    <property type="project" value="UniProtKB-UniRule"/>
</dbReference>
<dbReference type="CDD" id="cd00071">
    <property type="entry name" value="GMPK"/>
    <property type="match status" value="1"/>
</dbReference>
<dbReference type="FunFam" id="3.30.63.10:FF:000002">
    <property type="entry name" value="Guanylate kinase 1"/>
    <property type="match status" value="1"/>
</dbReference>
<dbReference type="Gene3D" id="3.30.63.10">
    <property type="entry name" value="Guanylate Kinase phosphate binding domain"/>
    <property type="match status" value="1"/>
</dbReference>
<dbReference type="Gene3D" id="3.40.50.300">
    <property type="entry name" value="P-loop containing nucleotide triphosphate hydrolases"/>
    <property type="match status" value="1"/>
</dbReference>
<dbReference type="HAMAP" id="MF_00328">
    <property type="entry name" value="Guanylate_kinase"/>
    <property type="match status" value="1"/>
</dbReference>
<dbReference type="InterPro" id="IPR008145">
    <property type="entry name" value="GK/Ca_channel_bsu"/>
</dbReference>
<dbReference type="InterPro" id="IPR008144">
    <property type="entry name" value="Guanylate_kin-like_dom"/>
</dbReference>
<dbReference type="InterPro" id="IPR017665">
    <property type="entry name" value="Guanylate_kinase"/>
</dbReference>
<dbReference type="InterPro" id="IPR020590">
    <property type="entry name" value="Guanylate_kinase_CS"/>
</dbReference>
<dbReference type="InterPro" id="IPR027417">
    <property type="entry name" value="P-loop_NTPase"/>
</dbReference>
<dbReference type="NCBIfam" id="TIGR03263">
    <property type="entry name" value="guanyl_kin"/>
    <property type="match status" value="1"/>
</dbReference>
<dbReference type="PANTHER" id="PTHR23117:SF13">
    <property type="entry name" value="GUANYLATE KINASE"/>
    <property type="match status" value="1"/>
</dbReference>
<dbReference type="PANTHER" id="PTHR23117">
    <property type="entry name" value="GUANYLATE KINASE-RELATED"/>
    <property type="match status" value="1"/>
</dbReference>
<dbReference type="Pfam" id="PF00625">
    <property type="entry name" value="Guanylate_kin"/>
    <property type="match status" value="1"/>
</dbReference>
<dbReference type="SMART" id="SM00072">
    <property type="entry name" value="GuKc"/>
    <property type="match status" value="1"/>
</dbReference>
<dbReference type="SUPFAM" id="SSF52540">
    <property type="entry name" value="P-loop containing nucleoside triphosphate hydrolases"/>
    <property type="match status" value="1"/>
</dbReference>
<dbReference type="PROSITE" id="PS00856">
    <property type="entry name" value="GUANYLATE_KINASE_1"/>
    <property type="match status" value="1"/>
</dbReference>
<dbReference type="PROSITE" id="PS50052">
    <property type="entry name" value="GUANYLATE_KINASE_2"/>
    <property type="match status" value="1"/>
</dbReference>
<comment type="function">
    <text evidence="1">Essential for recycling GMP and indirectly, cGMP.</text>
</comment>
<comment type="catalytic activity">
    <reaction evidence="1">
        <text>GMP + ATP = GDP + ADP</text>
        <dbReference type="Rhea" id="RHEA:20780"/>
        <dbReference type="ChEBI" id="CHEBI:30616"/>
        <dbReference type="ChEBI" id="CHEBI:58115"/>
        <dbReference type="ChEBI" id="CHEBI:58189"/>
        <dbReference type="ChEBI" id="CHEBI:456216"/>
        <dbReference type="EC" id="2.7.4.8"/>
    </reaction>
</comment>
<comment type="subcellular location">
    <subcellularLocation>
        <location evidence="1">Cytoplasm</location>
    </subcellularLocation>
</comment>
<comment type="similarity">
    <text evidence="1">Belongs to the guanylate kinase family.</text>
</comment>
<sequence length="209" mass="24089">MNDSLKSRGIMLVISSPSGGGKTTISHLLINELQNDLVRSISVTTREPRDGEINGKDYFFVTEPEFINLCNTNQMLEYAKVFGNYYGIPRKFVTDNIANGVSVLFSIDWQGAFKLIDIMREHVVSIFILPPSMEELQRRLYNRSGESDVINKRLGEAAFEISHCYRYDYVIVNHDIEQSVYQIKCIFTSEKLKTQRRVSLKQFIDNCIR</sequence>
<gene>
    <name evidence="1" type="primary">gmk</name>
    <name type="ordered locus">ECH_0322</name>
</gene>